<proteinExistence type="inferred from homology"/>
<protein>
    <recommendedName>
        <fullName evidence="1">Phosphomethylpyrimidine synthase</fullName>
        <ecNumber evidence="1">4.1.99.17</ecNumber>
    </recommendedName>
    <alternativeName>
        <fullName evidence="1">Hydroxymethylpyrimidine phosphate synthase</fullName>
        <shortName evidence="1">HMP-P synthase</shortName>
        <shortName evidence="1">HMP-phosphate synthase</shortName>
        <shortName evidence="1">HMPP synthase</shortName>
    </alternativeName>
    <alternativeName>
        <fullName evidence="1">Thiamine biosynthesis protein ThiC</fullName>
    </alternativeName>
</protein>
<gene>
    <name evidence="1" type="primary">thiC</name>
    <name type="ordered locus">CTC_00828</name>
</gene>
<dbReference type="EC" id="4.1.99.17" evidence="1"/>
<dbReference type="EMBL" id="AE015927">
    <property type="protein sequence ID" value="AAO35426.1"/>
    <property type="molecule type" value="Genomic_DNA"/>
</dbReference>
<dbReference type="SMR" id="Q897B2"/>
<dbReference type="STRING" id="212717.CTC_00828"/>
<dbReference type="KEGG" id="ctc:CTC_00828"/>
<dbReference type="HOGENOM" id="CLU_013181_2_2_9"/>
<dbReference type="UniPathway" id="UPA00060"/>
<dbReference type="Proteomes" id="UP000001412">
    <property type="component" value="Chromosome"/>
</dbReference>
<dbReference type="GO" id="GO:0005829">
    <property type="term" value="C:cytosol"/>
    <property type="evidence" value="ECO:0007669"/>
    <property type="project" value="TreeGrafter"/>
</dbReference>
<dbReference type="GO" id="GO:0051539">
    <property type="term" value="F:4 iron, 4 sulfur cluster binding"/>
    <property type="evidence" value="ECO:0007669"/>
    <property type="project" value="UniProtKB-KW"/>
</dbReference>
<dbReference type="GO" id="GO:0016830">
    <property type="term" value="F:carbon-carbon lyase activity"/>
    <property type="evidence" value="ECO:0007669"/>
    <property type="project" value="InterPro"/>
</dbReference>
<dbReference type="GO" id="GO:0008270">
    <property type="term" value="F:zinc ion binding"/>
    <property type="evidence" value="ECO:0007669"/>
    <property type="project" value="UniProtKB-UniRule"/>
</dbReference>
<dbReference type="GO" id="GO:0009228">
    <property type="term" value="P:thiamine biosynthetic process"/>
    <property type="evidence" value="ECO:0007669"/>
    <property type="project" value="UniProtKB-KW"/>
</dbReference>
<dbReference type="GO" id="GO:0009229">
    <property type="term" value="P:thiamine diphosphate biosynthetic process"/>
    <property type="evidence" value="ECO:0007669"/>
    <property type="project" value="UniProtKB-UniRule"/>
</dbReference>
<dbReference type="FunFam" id="3.20.20.540:FF:000001">
    <property type="entry name" value="Phosphomethylpyrimidine synthase"/>
    <property type="match status" value="1"/>
</dbReference>
<dbReference type="Gene3D" id="6.10.250.620">
    <property type="match status" value="1"/>
</dbReference>
<dbReference type="Gene3D" id="3.20.20.540">
    <property type="entry name" value="Radical SAM ThiC family, central domain"/>
    <property type="match status" value="1"/>
</dbReference>
<dbReference type="HAMAP" id="MF_00089">
    <property type="entry name" value="ThiC"/>
    <property type="match status" value="1"/>
</dbReference>
<dbReference type="InterPro" id="IPR037509">
    <property type="entry name" value="ThiC"/>
</dbReference>
<dbReference type="InterPro" id="IPR038521">
    <property type="entry name" value="ThiC/Bza_core_dom"/>
</dbReference>
<dbReference type="InterPro" id="IPR002817">
    <property type="entry name" value="ThiC/BzaA/B"/>
</dbReference>
<dbReference type="NCBIfam" id="NF009895">
    <property type="entry name" value="PRK13352.1"/>
    <property type="match status" value="1"/>
</dbReference>
<dbReference type="NCBIfam" id="TIGR00190">
    <property type="entry name" value="thiC"/>
    <property type="match status" value="1"/>
</dbReference>
<dbReference type="PANTHER" id="PTHR30557:SF1">
    <property type="entry name" value="PHOSPHOMETHYLPYRIMIDINE SYNTHASE, CHLOROPLASTIC"/>
    <property type="match status" value="1"/>
</dbReference>
<dbReference type="PANTHER" id="PTHR30557">
    <property type="entry name" value="THIAMINE BIOSYNTHESIS PROTEIN THIC"/>
    <property type="match status" value="1"/>
</dbReference>
<dbReference type="Pfam" id="PF01964">
    <property type="entry name" value="ThiC_Rad_SAM"/>
    <property type="match status" value="1"/>
</dbReference>
<dbReference type="SFLD" id="SFLDF00407">
    <property type="entry name" value="phosphomethylpyrimidine_syntha"/>
    <property type="match status" value="1"/>
</dbReference>
<dbReference type="SFLD" id="SFLDG01114">
    <property type="entry name" value="phosphomethylpyrimidine_syntha"/>
    <property type="match status" value="1"/>
</dbReference>
<dbReference type="SFLD" id="SFLDS00113">
    <property type="entry name" value="Radical_SAM_Phosphomethylpyrim"/>
    <property type="match status" value="1"/>
</dbReference>
<reference key="1">
    <citation type="journal article" date="2003" name="Proc. Natl. Acad. Sci. U.S.A.">
        <title>The genome sequence of Clostridium tetani, the causative agent of tetanus disease.</title>
        <authorList>
            <person name="Brueggemann H."/>
            <person name="Baeumer S."/>
            <person name="Fricke W.F."/>
            <person name="Wiezer A."/>
            <person name="Liesegang H."/>
            <person name="Decker I."/>
            <person name="Herzberg C."/>
            <person name="Martinez-Arias R."/>
            <person name="Merkl R."/>
            <person name="Henne A."/>
            <person name="Gottschalk G."/>
        </authorList>
    </citation>
    <scope>NUCLEOTIDE SEQUENCE [LARGE SCALE GENOMIC DNA]</scope>
    <source>
        <strain>Massachusetts / E88</strain>
    </source>
</reference>
<organism>
    <name type="scientific">Clostridium tetani (strain Massachusetts / E88)</name>
    <dbReference type="NCBI Taxonomy" id="212717"/>
    <lineage>
        <taxon>Bacteria</taxon>
        <taxon>Bacillati</taxon>
        <taxon>Bacillota</taxon>
        <taxon>Clostridia</taxon>
        <taxon>Eubacteriales</taxon>
        <taxon>Clostridiaceae</taxon>
        <taxon>Clostridium</taxon>
    </lineage>
</organism>
<keyword id="KW-0004">4Fe-4S</keyword>
<keyword id="KW-0408">Iron</keyword>
<keyword id="KW-0411">Iron-sulfur</keyword>
<keyword id="KW-0456">Lyase</keyword>
<keyword id="KW-0479">Metal-binding</keyword>
<keyword id="KW-1185">Reference proteome</keyword>
<keyword id="KW-0949">S-adenosyl-L-methionine</keyword>
<keyword id="KW-0784">Thiamine biosynthesis</keyword>
<keyword id="KW-0862">Zinc</keyword>
<name>THIC_CLOTE</name>
<evidence type="ECO:0000255" key="1">
    <source>
        <dbReference type="HAMAP-Rule" id="MF_00089"/>
    </source>
</evidence>
<accession>Q897B2</accession>
<comment type="function">
    <text evidence="1">Catalyzes the synthesis of the hydroxymethylpyrimidine phosphate (HMP-P) moiety of thiamine from aminoimidazole ribotide (AIR) in a radical S-adenosyl-L-methionine (SAM)-dependent reaction.</text>
</comment>
<comment type="catalytic activity">
    <reaction evidence="1">
        <text>5-amino-1-(5-phospho-beta-D-ribosyl)imidazole + S-adenosyl-L-methionine = 4-amino-2-methyl-5-(phosphooxymethyl)pyrimidine + CO + 5'-deoxyadenosine + formate + L-methionine + 3 H(+)</text>
        <dbReference type="Rhea" id="RHEA:24840"/>
        <dbReference type="ChEBI" id="CHEBI:15378"/>
        <dbReference type="ChEBI" id="CHEBI:15740"/>
        <dbReference type="ChEBI" id="CHEBI:17245"/>
        <dbReference type="ChEBI" id="CHEBI:17319"/>
        <dbReference type="ChEBI" id="CHEBI:57844"/>
        <dbReference type="ChEBI" id="CHEBI:58354"/>
        <dbReference type="ChEBI" id="CHEBI:59789"/>
        <dbReference type="ChEBI" id="CHEBI:137981"/>
        <dbReference type="EC" id="4.1.99.17"/>
    </reaction>
</comment>
<comment type="cofactor">
    <cofactor evidence="1">
        <name>[4Fe-4S] cluster</name>
        <dbReference type="ChEBI" id="CHEBI:49883"/>
    </cofactor>
    <text evidence="1">Binds 1 [4Fe-4S] cluster per subunit. The cluster is coordinated with 3 cysteines and an exchangeable S-adenosyl-L-methionine.</text>
</comment>
<comment type="pathway">
    <text evidence="1">Cofactor biosynthesis; thiamine diphosphate biosynthesis.</text>
</comment>
<comment type="similarity">
    <text evidence="1">Belongs to the ThiC family.</text>
</comment>
<sequence length="457" mass="51403">MRESLKLSLFYFNKKERNKMNYTTQMDAAKRGIVTKEMETIAKKEGIDVKKIIECVAKGSVAIPANKNHKSLSAEGVGQGLRTKINVNLGISKDCCNVDRELEKVKKAIDMKAEAIMDLSCFGKTQEFRKRLIEMSPAMIGTVPMYDAIGFYDKELKDITAEELLDVIETHAKDGVDFMTIHAGLNREAVEIFKRNERLTNIVSRGGSLLYAWMELNNKENPFYEHFDKVLDICEKYDVTISLGDACRPGSIHDSTDASQIKELMTLGELTKRAWERNVQIIIEGPGHMSLDEIETNMKLEKKLCYNAPFYVLGPIVTDIAPGYDHITSAIGGAIAATYGADFLCYVTPAEHLRLPDLDDMKEGIIATKIAAHAADIAKGIKGAREWDNKMSVARKELDWEKMFDLAIDNEKARKYRKNSTPEVNDSCTMCGKMCAVRNMNKVMQGKDINILRNEDK</sequence>
<feature type="chain" id="PRO_0000152798" description="Phosphomethylpyrimidine synthase">
    <location>
        <begin position="1"/>
        <end position="457"/>
    </location>
</feature>
<feature type="binding site" evidence="1">
    <location>
        <position position="88"/>
    </location>
    <ligand>
        <name>substrate</name>
    </ligand>
</feature>
<feature type="binding site" evidence="1">
    <location>
        <position position="117"/>
    </location>
    <ligand>
        <name>substrate</name>
    </ligand>
</feature>
<feature type="binding site" evidence="1">
    <location>
        <position position="146"/>
    </location>
    <ligand>
        <name>substrate</name>
    </ligand>
</feature>
<feature type="binding site" evidence="1">
    <location>
        <position position="182"/>
    </location>
    <ligand>
        <name>substrate</name>
    </ligand>
</feature>
<feature type="binding site" evidence="1">
    <location>
        <begin position="204"/>
        <end position="206"/>
    </location>
    <ligand>
        <name>substrate</name>
    </ligand>
</feature>
<feature type="binding site" evidence="1">
    <location>
        <begin position="245"/>
        <end position="248"/>
    </location>
    <ligand>
        <name>substrate</name>
    </ligand>
</feature>
<feature type="binding site" evidence="1">
    <location>
        <position position="284"/>
    </location>
    <ligand>
        <name>substrate</name>
    </ligand>
</feature>
<feature type="binding site" evidence="1">
    <location>
        <position position="288"/>
    </location>
    <ligand>
        <name>Zn(2+)</name>
        <dbReference type="ChEBI" id="CHEBI:29105"/>
    </ligand>
</feature>
<feature type="binding site" evidence="1">
    <location>
        <position position="311"/>
    </location>
    <ligand>
        <name>substrate</name>
    </ligand>
</feature>
<feature type="binding site" evidence="1">
    <location>
        <position position="352"/>
    </location>
    <ligand>
        <name>Zn(2+)</name>
        <dbReference type="ChEBI" id="CHEBI:29105"/>
    </ligand>
</feature>
<feature type="binding site" evidence="1">
    <location>
        <position position="428"/>
    </location>
    <ligand>
        <name>[4Fe-4S] cluster</name>
        <dbReference type="ChEBI" id="CHEBI:49883"/>
        <note>4Fe-4S-S-AdoMet</note>
    </ligand>
</feature>
<feature type="binding site" evidence="1">
    <location>
        <position position="431"/>
    </location>
    <ligand>
        <name>[4Fe-4S] cluster</name>
        <dbReference type="ChEBI" id="CHEBI:49883"/>
        <note>4Fe-4S-S-AdoMet</note>
    </ligand>
</feature>
<feature type="binding site" evidence="1">
    <location>
        <position position="435"/>
    </location>
    <ligand>
        <name>[4Fe-4S] cluster</name>
        <dbReference type="ChEBI" id="CHEBI:49883"/>
        <note>4Fe-4S-S-AdoMet</note>
    </ligand>
</feature>